<gene>
    <name evidence="8 9" type="primary">clec-87</name>
    <name evidence="7" type="synonym">cpg-5</name>
    <name type="ORF">C25A1.8</name>
</gene>
<accession>Q9XVS3</accession>
<protein>
    <recommendedName>
        <fullName>C-type lectin domain-containing protein 87</fullName>
    </recommendedName>
    <alternativeName>
        <fullName>Chondroitin proteoglycan 5</fullName>
    </alternativeName>
</protein>
<reference evidence="6 7" key="1">
    <citation type="journal article" date="2006" name="J. Cell Biol.">
        <title>Identification of novel chondroitin proteoglycans in Caenorhabditis elegans: embryonic cell division depends on CPG-1 and CPG-2.</title>
        <authorList>
            <person name="Olson S.K."/>
            <person name="Bishop J.R."/>
            <person name="Yates J.R."/>
            <person name="Oegema K."/>
            <person name="Esko J.D."/>
        </authorList>
    </citation>
    <scope>NUCLEOTIDE SEQUENCE [MRNA]</scope>
    <scope>IDENTIFICATION BY MASS SPECTROMETRY</scope>
    <scope>GLYCOSYLATION AT SER-31</scope>
</reference>
<reference evidence="8" key="2">
    <citation type="journal article" date="1998" name="Science">
        <title>Genome sequence of the nematode C. elegans: a platform for investigating biology.</title>
        <authorList>
            <consortium name="The C. elegans sequencing consortium"/>
        </authorList>
    </citation>
    <scope>NUCLEOTIDE SEQUENCE [LARGE SCALE GENOMIC DNA]</scope>
    <source>
        <strain>Bristol N2</strain>
    </source>
</reference>
<reference evidence="6" key="3">
    <citation type="journal article" date="2003" name="Nat. Biotechnol.">
        <title>Lectin affinity capture, isotope-coded tagging and mass spectrometry to identify N-linked glycoproteins.</title>
        <authorList>
            <person name="Kaji H."/>
            <person name="Saito H."/>
            <person name="Yamauchi Y."/>
            <person name="Shinkawa T."/>
            <person name="Taoka M."/>
            <person name="Hirabayashi J."/>
            <person name="Kasai K."/>
            <person name="Takahashi N."/>
            <person name="Isobe T."/>
        </authorList>
    </citation>
    <scope>GLYCOSYLATION AT ASN-81</scope>
    <scope>IDENTIFICATION BY MASS SPECTROMETRY</scope>
    <source>
        <strain>Bristol N2</strain>
    </source>
</reference>
<reference key="4">
    <citation type="journal article" date="2007" name="Mol. Cell. Proteomics">
        <title>Proteomics reveals N-linked glycoprotein diversity in Caenorhabditis elegans and suggests an atypical translocation mechanism for integral membrane proteins.</title>
        <authorList>
            <person name="Kaji H."/>
            <person name="Kamiie J."/>
            <person name="Kawakami H."/>
            <person name="Kido K."/>
            <person name="Yamauchi Y."/>
            <person name="Shinkawa T."/>
            <person name="Taoka M."/>
            <person name="Takahashi N."/>
            <person name="Isobe T."/>
        </authorList>
    </citation>
    <scope>GLYCOSYLATION [LARGE SCALE ANALYSIS] AT ASN-81</scope>
    <scope>IDENTIFICATION BY MASS SPECTROMETRY</scope>
    <source>
        <strain>Bristol N2</strain>
    </source>
</reference>
<name>CLC87_CAEEL</name>
<evidence type="ECO:0000255" key="1"/>
<evidence type="ECO:0000255" key="2">
    <source>
        <dbReference type="PROSITE-ProRule" id="PRU00040"/>
    </source>
</evidence>
<evidence type="ECO:0000269" key="3">
    <source>
    </source>
</evidence>
<evidence type="ECO:0000269" key="4">
    <source>
    </source>
</evidence>
<evidence type="ECO:0000269" key="5">
    <source>
    </source>
</evidence>
<evidence type="ECO:0000305" key="6"/>
<evidence type="ECO:0000312" key="7">
    <source>
        <dbReference type="EMBL" id="ABC65815.1"/>
    </source>
</evidence>
<evidence type="ECO:0000312" key="8">
    <source>
        <dbReference type="EMBL" id="CAB02756.1"/>
    </source>
</evidence>
<evidence type="ECO:0000312" key="9">
    <source>
        <dbReference type="WormBase" id="C25A1.8"/>
    </source>
</evidence>
<keyword id="KW-1015">Disulfide bond</keyword>
<keyword id="KW-0325">Glycoprotein</keyword>
<keyword id="KW-0430">Lectin</keyword>
<keyword id="KW-0654">Proteoglycan</keyword>
<keyword id="KW-1185">Reference proteome</keyword>
<keyword id="KW-0732">Signal</keyword>
<proteinExistence type="evidence at protein level"/>
<sequence length="233" mass="26764">MRFCLLVAFILPGLFLVHAAPTSSTELPEASGEAPETSPLVQNDEQPHQRLTFYNWDYKDLGTTAFEDISFPARQPPAFVNQTEKCPDGWLRFADSCYWIEKELLGFAKAERNCFEKQSTLFVANSIEEWDAIRVQAKEAFFSWIGLVRFTHYEKLEQLPRWQTEGALNPTKINWLIKPYKPLFNGWSSLANCAASYKSPSSLESASYTYFYPCTYMLYSICERNSTIVNALQ</sequence>
<dbReference type="EMBL" id="DQ340627">
    <property type="protein sequence ID" value="ABC65815.1"/>
    <property type="molecule type" value="mRNA"/>
</dbReference>
<dbReference type="EMBL" id="Z81038">
    <property type="protein sequence ID" value="CAB02756.1"/>
    <property type="molecule type" value="Genomic_DNA"/>
</dbReference>
<dbReference type="PIR" id="T19432">
    <property type="entry name" value="T19432"/>
</dbReference>
<dbReference type="RefSeq" id="NP_492682.1">
    <property type="nucleotide sequence ID" value="NM_060281.6"/>
</dbReference>
<dbReference type="SMR" id="Q9XVS3"/>
<dbReference type="BioGRID" id="38304">
    <property type="interactions" value="2"/>
</dbReference>
<dbReference type="FunCoup" id="Q9XVS3">
    <property type="interactions" value="190"/>
</dbReference>
<dbReference type="STRING" id="6239.C25A1.8.1"/>
<dbReference type="GlyCosmos" id="Q9XVS3">
    <property type="glycosylation" value="3 sites, No reported glycans"/>
</dbReference>
<dbReference type="iPTMnet" id="Q9XVS3"/>
<dbReference type="PaxDb" id="6239-C25A1.8"/>
<dbReference type="PeptideAtlas" id="Q9XVS3"/>
<dbReference type="EnsemblMetazoa" id="C25A1.8.1">
    <property type="protein sequence ID" value="C25A1.8.1"/>
    <property type="gene ID" value="WBGene00007709"/>
</dbReference>
<dbReference type="GeneID" id="172885"/>
<dbReference type="KEGG" id="cel:CELE_C25A1.8"/>
<dbReference type="UCSC" id="C25A1.8">
    <property type="organism name" value="c. elegans"/>
</dbReference>
<dbReference type="AGR" id="WB:WBGene00007709"/>
<dbReference type="CTD" id="172885"/>
<dbReference type="WormBase" id="C25A1.8">
    <property type="protein sequence ID" value="CE08374"/>
    <property type="gene ID" value="WBGene00007709"/>
    <property type="gene designation" value="clec-87"/>
</dbReference>
<dbReference type="eggNOG" id="KOG4297">
    <property type="taxonomic scope" value="Eukaryota"/>
</dbReference>
<dbReference type="GeneTree" id="ENSGT00970000196041"/>
<dbReference type="HOGENOM" id="CLU_093598_0_0_1"/>
<dbReference type="InParanoid" id="Q9XVS3"/>
<dbReference type="OMA" id="CYWIETE"/>
<dbReference type="OrthoDB" id="6133475at2759"/>
<dbReference type="PhylomeDB" id="Q9XVS3"/>
<dbReference type="Reactome" id="R-CEL-1236978">
    <property type="pathway name" value="Cross-presentation of soluble exogenous antigens (endosomes)"/>
</dbReference>
<dbReference type="Reactome" id="R-CEL-446203">
    <property type="pathway name" value="Asparagine N-linked glycosylation"/>
</dbReference>
<dbReference type="Reactome" id="R-CEL-5621480">
    <property type="pathway name" value="Dectin-2 family"/>
</dbReference>
<dbReference type="Reactome" id="R-CEL-6798695">
    <property type="pathway name" value="Neutrophil degranulation"/>
</dbReference>
<dbReference type="PRO" id="PR:Q9XVS3"/>
<dbReference type="Proteomes" id="UP000001940">
    <property type="component" value="Chromosome I"/>
</dbReference>
<dbReference type="Bgee" id="WBGene00007709">
    <property type="expression patterns" value="Expressed in germ line (C elegans) and 4 other cell types or tissues"/>
</dbReference>
<dbReference type="GO" id="GO:0009897">
    <property type="term" value="C:external side of plasma membrane"/>
    <property type="evidence" value="ECO:0000318"/>
    <property type="project" value="GO_Central"/>
</dbReference>
<dbReference type="GO" id="GO:0030246">
    <property type="term" value="F:carbohydrate binding"/>
    <property type="evidence" value="ECO:0000318"/>
    <property type="project" value="GO_Central"/>
</dbReference>
<dbReference type="GO" id="GO:0038187">
    <property type="term" value="F:pattern recognition receptor activity"/>
    <property type="evidence" value="ECO:0000318"/>
    <property type="project" value="GO_Central"/>
</dbReference>
<dbReference type="GO" id="GO:0006955">
    <property type="term" value="P:immune response"/>
    <property type="evidence" value="ECO:0000318"/>
    <property type="project" value="GO_Central"/>
</dbReference>
<dbReference type="Gene3D" id="3.10.100.10">
    <property type="entry name" value="Mannose-Binding Protein A, subunit A"/>
    <property type="match status" value="1"/>
</dbReference>
<dbReference type="InterPro" id="IPR001304">
    <property type="entry name" value="C-type_lectin-like"/>
</dbReference>
<dbReference type="InterPro" id="IPR016186">
    <property type="entry name" value="C-type_lectin-like/link_sf"/>
</dbReference>
<dbReference type="InterPro" id="IPR051379">
    <property type="entry name" value="C-type_Lectin_Receptor_IMM"/>
</dbReference>
<dbReference type="InterPro" id="IPR016187">
    <property type="entry name" value="CTDL_fold"/>
</dbReference>
<dbReference type="PANTHER" id="PTHR46746:SF9">
    <property type="entry name" value="CD209 ANTIGEN-LIKE PROTEIN C-LIKE"/>
    <property type="match status" value="1"/>
</dbReference>
<dbReference type="PANTHER" id="PTHR46746">
    <property type="entry name" value="KILLER CELL LECTIN-LIKE RECEPTOR SUBFAMILY F MEMBER 2"/>
    <property type="match status" value="1"/>
</dbReference>
<dbReference type="Pfam" id="PF00059">
    <property type="entry name" value="Lectin_C"/>
    <property type="match status" value="1"/>
</dbReference>
<dbReference type="SMART" id="SM00034">
    <property type="entry name" value="CLECT"/>
    <property type="match status" value="1"/>
</dbReference>
<dbReference type="SUPFAM" id="SSF56436">
    <property type="entry name" value="C-type lectin-like"/>
    <property type="match status" value="1"/>
</dbReference>
<dbReference type="PROSITE" id="PS50041">
    <property type="entry name" value="C_TYPE_LECTIN_2"/>
    <property type="match status" value="1"/>
</dbReference>
<organism>
    <name type="scientific">Caenorhabditis elegans</name>
    <dbReference type="NCBI Taxonomy" id="6239"/>
    <lineage>
        <taxon>Eukaryota</taxon>
        <taxon>Metazoa</taxon>
        <taxon>Ecdysozoa</taxon>
        <taxon>Nematoda</taxon>
        <taxon>Chromadorea</taxon>
        <taxon>Rhabditida</taxon>
        <taxon>Rhabditina</taxon>
        <taxon>Rhabditomorpha</taxon>
        <taxon>Rhabditoidea</taxon>
        <taxon>Rhabditidae</taxon>
        <taxon>Peloderinae</taxon>
        <taxon>Caenorhabditis</taxon>
    </lineage>
</organism>
<feature type="signal peptide" evidence="1">
    <location>
        <begin position="1"/>
        <end position="19"/>
    </location>
</feature>
<feature type="chain" id="PRO_0000320338" description="C-type lectin domain-containing protein 87" evidence="1">
    <location>
        <begin position="20"/>
        <end position="233"/>
    </location>
</feature>
<feature type="domain" description="C-type lectin" evidence="2">
    <location>
        <begin position="93"/>
        <end position="223"/>
    </location>
</feature>
<feature type="glycosylation site" description="O-linked (Xyl...) (chondroitin sulfate) serine" evidence="4">
    <location>
        <position position="31"/>
    </location>
</feature>
<feature type="glycosylation site" description="N-linked (GlcNAc...) asparagine" evidence="3 5">
    <location>
        <position position="81"/>
    </location>
</feature>
<feature type="glycosylation site" description="N-linked (GlcNAc...) asparagine" evidence="1">
    <location>
        <position position="225"/>
    </location>
</feature>
<feature type="disulfide bond" evidence="2">
    <location>
        <begin position="114"/>
        <end position="222"/>
    </location>
</feature>
<feature type="disulfide bond" evidence="2">
    <location>
        <begin position="193"/>
        <end position="214"/>
    </location>
</feature>